<feature type="chain" id="PRO_0000083611" description="3-isopropylmalate dehydrogenase">
    <location>
        <begin position="1"/>
        <end position="359"/>
    </location>
</feature>
<feature type="binding site" evidence="1">
    <location>
        <begin position="74"/>
        <end position="85"/>
    </location>
    <ligand>
        <name>NAD(+)</name>
        <dbReference type="ChEBI" id="CHEBI:57540"/>
    </ligand>
</feature>
<feature type="binding site" evidence="1">
    <location>
        <position position="92"/>
    </location>
    <ligand>
        <name>substrate</name>
    </ligand>
</feature>
<feature type="binding site" evidence="1">
    <location>
        <position position="102"/>
    </location>
    <ligand>
        <name>substrate</name>
    </ligand>
</feature>
<feature type="binding site" evidence="1">
    <location>
        <position position="131"/>
    </location>
    <ligand>
        <name>substrate</name>
    </ligand>
</feature>
<feature type="binding site" evidence="1">
    <location>
        <position position="220"/>
    </location>
    <ligand>
        <name>Mg(2+)</name>
        <dbReference type="ChEBI" id="CHEBI:18420"/>
    </ligand>
</feature>
<feature type="binding site" evidence="1">
    <location>
        <position position="220"/>
    </location>
    <ligand>
        <name>substrate</name>
    </ligand>
</feature>
<feature type="binding site" evidence="1">
    <location>
        <position position="245"/>
    </location>
    <ligand>
        <name>Mg(2+)</name>
        <dbReference type="ChEBI" id="CHEBI:18420"/>
    </ligand>
</feature>
<feature type="binding site" evidence="1">
    <location>
        <position position="249"/>
    </location>
    <ligand>
        <name>Mg(2+)</name>
        <dbReference type="ChEBI" id="CHEBI:18420"/>
    </ligand>
</feature>
<feature type="binding site" evidence="1">
    <location>
        <begin position="284"/>
        <end position="295"/>
    </location>
    <ligand>
        <name>NAD(+)</name>
        <dbReference type="ChEBI" id="CHEBI:57540"/>
    </ligand>
</feature>
<feature type="site" description="Important for catalysis" evidence="1">
    <location>
        <position position="138"/>
    </location>
</feature>
<feature type="site" description="Important for catalysis" evidence="1">
    <location>
        <position position="187"/>
    </location>
</feature>
<dbReference type="EC" id="1.1.1.85"/>
<dbReference type="EMBL" id="X61490">
    <property type="protein sequence ID" value="CAA43710.1"/>
    <property type="molecule type" value="Genomic_DNA"/>
</dbReference>
<dbReference type="PIR" id="S32969">
    <property type="entry name" value="S32969"/>
</dbReference>
<dbReference type="SMR" id="P41766"/>
<dbReference type="VEuPathDB" id="FungiDB:KLMA_20483"/>
<dbReference type="UniPathway" id="UPA00048">
    <property type="reaction ID" value="UER00072"/>
</dbReference>
<dbReference type="GO" id="GO:0005829">
    <property type="term" value="C:cytosol"/>
    <property type="evidence" value="ECO:0007669"/>
    <property type="project" value="TreeGrafter"/>
</dbReference>
<dbReference type="GO" id="GO:0003862">
    <property type="term" value="F:3-isopropylmalate dehydrogenase activity"/>
    <property type="evidence" value="ECO:0007669"/>
    <property type="project" value="UniProtKB-EC"/>
</dbReference>
<dbReference type="GO" id="GO:0000287">
    <property type="term" value="F:magnesium ion binding"/>
    <property type="evidence" value="ECO:0007669"/>
    <property type="project" value="InterPro"/>
</dbReference>
<dbReference type="GO" id="GO:0051287">
    <property type="term" value="F:NAD binding"/>
    <property type="evidence" value="ECO:0007669"/>
    <property type="project" value="InterPro"/>
</dbReference>
<dbReference type="GO" id="GO:0009098">
    <property type="term" value="P:L-leucine biosynthetic process"/>
    <property type="evidence" value="ECO:0007669"/>
    <property type="project" value="UniProtKB-UniPathway"/>
</dbReference>
<dbReference type="FunFam" id="3.40.718.10:FF:000006">
    <property type="entry name" value="3-isopropylmalate dehydrogenase"/>
    <property type="match status" value="1"/>
</dbReference>
<dbReference type="Gene3D" id="3.40.718.10">
    <property type="entry name" value="Isopropylmalate Dehydrogenase"/>
    <property type="match status" value="1"/>
</dbReference>
<dbReference type="InterPro" id="IPR019818">
    <property type="entry name" value="IsoCit/isopropylmalate_DH_CS"/>
</dbReference>
<dbReference type="InterPro" id="IPR024084">
    <property type="entry name" value="IsoPropMal-DH-like_dom"/>
</dbReference>
<dbReference type="InterPro" id="IPR004429">
    <property type="entry name" value="Isopropylmalate_DH"/>
</dbReference>
<dbReference type="NCBIfam" id="TIGR00169">
    <property type="entry name" value="leuB"/>
    <property type="match status" value="1"/>
</dbReference>
<dbReference type="PANTHER" id="PTHR42979">
    <property type="entry name" value="3-ISOPROPYLMALATE DEHYDROGENASE"/>
    <property type="match status" value="1"/>
</dbReference>
<dbReference type="PANTHER" id="PTHR42979:SF1">
    <property type="entry name" value="3-ISOPROPYLMALATE DEHYDROGENASE"/>
    <property type="match status" value="1"/>
</dbReference>
<dbReference type="Pfam" id="PF00180">
    <property type="entry name" value="Iso_dh"/>
    <property type="match status" value="1"/>
</dbReference>
<dbReference type="SMART" id="SM01329">
    <property type="entry name" value="Iso_dh"/>
    <property type="match status" value="1"/>
</dbReference>
<dbReference type="SUPFAM" id="SSF53659">
    <property type="entry name" value="Isocitrate/Isopropylmalate dehydrogenase-like"/>
    <property type="match status" value="1"/>
</dbReference>
<dbReference type="PROSITE" id="PS00470">
    <property type="entry name" value="IDH_IMDH"/>
    <property type="match status" value="1"/>
</dbReference>
<sequence>MSKNIVVLPGDHVGTEITNEAIKVLNAISEARPSIKFNFEHHLIGGAAIDATGVPLPDEASKKADAVLLGAVGGPKWGTGSVRPEQGLLKIRKELGLYANLRPCNFASDSLLDLSPLKPEYAKGTDFVVVRELVGGIYFGERKEDEGDGVAWDSEKYSVPEVQRITRMAAFLALQHNPPLPIWSLDKANVLASSRLWRKTVEETIKNEFPQLTVQHQLIDSAAMILVKSPTKLNGIVITNNMFGDIISDEASVIPGSLGLLPSASLASLPDTNKAFGLYEPCHGSAPDLPANKVNPIATILSAAMMLKLSLDLVEEGRAVEEAVRKVLDSGIRTGDLGGSNSTTEVGDAVAKAVKEILA</sequence>
<comment type="function">
    <text>Catalyzes the oxidation of 3-carboxy-2-hydroxy-4-methylpentanoate (3-isopropylmalate) to 3-carboxy-4-methyl-2-oxopentanoate. The product decarboxylates to 4-methyl-2 oxopentanoate.</text>
</comment>
<comment type="catalytic activity">
    <reaction>
        <text>(2R,3S)-3-isopropylmalate + NAD(+) = 4-methyl-2-oxopentanoate + CO2 + NADH</text>
        <dbReference type="Rhea" id="RHEA:32271"/>
        <dbReference type="ChEBI" id="CHEBI:16526"/>
        <dbReference type="ChEBI" id="CHEBI:17865"/>
        <dbReference type="ChEBI" id="CHEBI:35121"/>
        <dbReference type="ChEBI" id="CHEBI:57540"/>
        <dbReference type="ChEBI" id="CHEBI:57945"/>
        <dbReference type="EC" id="1.1.1.85"/>
    </reaction>
</comment>
<comment type="cofactor">
    <cofactor evidence="1">
        <name>Mg(2+)</name>
        <dbReference type="ChEBI" id="CHEBI:18420"/>
    </cofactor>
    <cofactor evidence="1">
        <name>Mn(2+)</name>
        <dbReference type="ChEBI" id="CHEBI:29035"/>
    </cofactor>
    <text evidence="1">Binds 1 Mg(2+) or Mn(2+) ion per subunit.</text>
</comment>
<comment type="pathway">
    <text>Amino-acid biosynthesis; L-leucine biosynthesis; L-leucine from 3-methyl-2-oxobutanoate: step 3/4.</text>
</comment>
<comment type="subunit">
    <text evidence="1">Homodimer.</text>
</comment>
<comment type="subcellular location">
    <subcellularLocation>
        <location>Cytoplasm</location>
    </subcellularLocation>
</comment>
<comment type="similarity">
    <text evidence="2">Belongs to the isocitrate and isopropylmalate dehydrogenases family.</text>
</comment>
<protein>
    <recommendedName>
        <fullName>3-isopropylmalate dehydrogenase</fullName>
        <shortName>3-IPM-DH</shortName>
        <shortName>IMDH</shortName>
        <ecNumber>1.1.1.85</ecNumber>
    </recommendedName>
    <alternativeName>
        <fullName>Beta-IPM dehydrogenase</fullName>
    </alternativeName>
</protein>
<proteinExistence type="inferred from homology"/>
<gene>
    <name type="primary">LEU2</name>
</gene>
<name>LEU3_KLUMA</name>
<evidence type="ECO:0000250" key="1"/>
<evidence type="ECO:0000305" key="2"/>
<keyword id="KW-0028">Amino-acid biosynthesis</keyword>
<keyword id="KW-0100">Branched-chain amino acid biosynthesis</keyword>
<keyword id="KW-0963">Cytoplasm</keyword>
<keyword id="KW-0432">Leucine biosynthesis</keyword>
<keyword id="KW-0460">Magnesium</keyword>
<keyword id="KW-0464">Manganese</keyword>
<keyword id="KW-0479">Metal-binding</keyword>
<keyword id="KW-0520">NAD</keyword>
<keyword id="KW-0560">Oxidoreductase</keyword>
<accession>P41766</accession>
<organism>
    <name type="scientific">Kluyveromyces marxianus</name>
    <name type="common">Yeast</name>
    <name type="synonym">Candida kefyr</name>
    <dbReference type="NCBI Taxonomy" id="4911"/>
    <lineage>
        <taxon>Eukaryota</taxon>
        <taxon>Fungi</taxon>
        <taxon>Dikarya</taxon>
        <taxon>Ascomycota</taxon>
        <taxon>Saccharomycotina</taxon>
        <taxon>Saccharomycetes</taxon>
        <taxon>Saccharomycetales</taxon>
        <taxon>Saccharomycetaceae</taxon>
        <taxon>Kluyveromyces</taxon>
    </lineage>
</organism>
<reference key="1">
    <citation type="journal article" date="1991" name="Yeast">
        <title>Cloning and disruption of the LEU2 gene of Kluyveromyces marxianus CBS 6556.</title>
        <authorList>
            <person name="Bergkamp R.J.M."/>
            <person name="Geerse R.H."/>
            <person name="Verbakel J.M.A."/>
            <person name="Musters W."/>
            <person name="Planta R.J."/>
        </authorList>
    </citation>
    <scope>NUCLEOTIDE SEQUENCE [GENOMIC DNA]</scope>
    <source>
        <strain>ATCC 26548 / CBS 6556 / NRRL Y-7571</strain>
    </source>
</reference>